<organism>
    <name type="scientific">Staphylococcus aureus (strain N315)</name>
    <dbReference type="NCBI Taxonomy" id="158879"/>
    <lineage>
        <taxon>Bacteria</taxon>
        <taxon>Bacillati</taxon>
        <taxon>Bacillota</taxon>
        <taxon>Bacilli</taxon>
        <taxon>Bacillales</taxon>
        <taxon>Staphylococcaceae</taxon>
        <taxon>Staphylococcus</taxon>
    </lineage>
</organism>
<gene>
    <name evidence="1" type="primary">tsf</name>
    <name type="ordered locus">SA1100</name>
</gene>
<protein>
    <recommendedName>
        <fullName evidence="1">Elongation factor Ts</fullName>
        <shortName evidence="1">EF-Ts</shortName>
    </recommendedName>
</protein>
<accession>P99171</accession>
<accession>Q99UL4</accession>
<dbReference type="EMBL" id="BA000018">
    <property type="protein sequence ID" value="BAB42352.1"/>
    <property type="molecule type" value="Genomic_DNA"/>
</dbReference>
<dbReference type="PIR" id="D89899">
    <property type="entry name" value="D89899"/>
</dbReference>
<dbReference type="RefSeq" id="WP_000201392.1">
    <property type="nucleotide sequence ID" value="NC_002745.2"/>
</dbReference>
<dbReference type="SMR" id="P99171"/>
<dbReference type="EnsemblBacteria" id="BAB42352">
    <property type="protein sequence ID" value="BAB42352"/>
    <property type="gene ID" value="BAB42352"/>
</dbReference>
<dbReference type="KEGG" id="sau:SA1100"/>
<dbReference type="HOGENOM" id="CLU_047155_0_2_9"/>
<dbReference type="GO" id="GO:0005737">
    <property type="term" value="C:cytoplasm"/>
    <property type="evidence" value="ECO:0007669"/>
    <property type="project" value="UniProtKB-SubCell"/>
</dbReference>
<dbReference type="GO" id="GO:0003746">
    <property type="term" value="F:translation elongation factor activity"/>
    <property type="evidence" value="ECO:0007669"/>
    <property type="project" value="UniProtKB-UniRule"/>
</dbReference>
<dbReference type="CDD" id="cd14275">
    <property type="entry name" value="UBA_EF-Ts"/>
    <property type="match status" value="1"/>
</dbReference>
<dbReference type="FunFam" id="1.10.286.20:FF:000003">
    <property type="entry name" value="Elongation factor Ts"/>
    <property type="match status" value="1"/>
</dbReference>
<dbReference type="FunFam" id="1.10.8.10:FF:000001">
    <property type="entry name" value="Elongation factor Ts"/>
    <property type="match status" value="1"/>
</dbReference>
<dbReference type="FunFam" id="3.30.479.20:FF:000005">
    <property type="entry name" value="Elongation factor Ts"/>
    <property type="match status" value="1"/>
</dbReference>
<dbReference type="Gene3D" id="1.10.286.20">
    <property type="match status" value="1"/>
</dbReference>
<dbReference type="Gene3D" id="1.10.8.10">
    <property type="entry name" value="DNA helicase RuvA subunit, C-terminal domain"/>
    <property type="match status" value="1"/>
</dbReference>
<dbReference type="Gene3D" id="3.30.479.20">
    <property type="entry name" value="Elongation factor Ts, dimerisation domain"/>
    <property type="match status" value="2"/>
</dbReference>
<dbReference type="HAMAP" id="MF_00050">
    <property type="entry name" value="EF_Ts"/>
    <property type="match status" value="1"/>
</dbReference>
<dbReference type="InterPro" id="IPR036402">
    <property type="entry name" value="EF-Ts_dimer_sf"/>
</dbReference>
<dbReference type="InterPro" id="IPR001816">
    <property type="entry name" value="Transl_elong_EFTs/EF1B"/>
</dbReference>
<dbReference type="InterPro" id="IPR014039">
    <property type="entry name" value="Transl_elong_EFTs/EF1B_dimer"/>
</dbReference>
<dbReference type="InterPro" id="IPR018101">
    <property type="entry name" value="Transl_elong_Ts_CS"/>
</dbReference>
<dbReference type="InterPro" id="IPR009060">
    <property type="entry name" value="UBA-like_sf"/>
</dbReference>
<dbReference type="NCBIfam" id="TIGR00116">
    <property type="entry name" value="tsf"/>
    <property type="match status" value="1"/>
</dbReference>
<dbReference type="PANTHER" id="PTHR11741">
    <property type="entry name" value="ELONGATION FACTOR TS"/>
    <property type="match status" value="1"/>
</dbReference>
<dbReference type="PANTHER" id="PTHR11741:SF0">
    <property type="entry name" value="ELONGATION FACTOR TS, MITOCHONDRIAL"/>
    <property type="match status" value="1"/>
</dbReference>
<dbReference type="Pfam" id="PF00889">
    <property type="entry name" value="EF_TS"/>
    <property type="match status" value="1"/>
</dbReference>
<dbReference type="SUPFAM" id="SSF54713">
    <property type="entry name" value="Elongation factor Ts (EF-Ts), dimerisation domain"/>
    <property type="match status" value="2"/>
</dbReference>
<dbReference type="SUPFAM" id="SSF46934">
    <property type="entry name" value="UBA-like"/>
    <property type="match status" value="1"/>
</dbReference>
<dbReference type="PROSITE" id="PS01126">
    <property type="entry name" value="EF_TS_1"/>
    <property type="match status" value="1"/>
</dbReference>
<dbReference type="PROSITE" id="PS01127">
    <property type="entry name" value="EF_TS_2"/>
    <property type="match status" value="1"/>
</dbReference>
<keyword id="KW-0963">Cytoplasm</keyword>
<keyword id="KW-0251">Elongation factor</keyword>
<keyword id="KW-0648">Protein biosynthesis</keyword>
<proteinExistence type="evidence at protein level"/>
<sequence>MATISAKLVKELRKKTGAGMMDCKKALTETDGDIDKAIDYLREKGIAKAAKKADRIAAEGLVHVETKGNDAVIVEINSETDFVARNEGFQELVKEIANQVLDTKAETVEALMETTLPNGKSVDERIKEAISTIGEKLSVRRFAIRTKTDNDAFGAYLHMGGRIGVLTVVEGSTDEEAARDVAMHIAAINPKYVSSEQVSEEEINHEREVLKQQALNEGKPENIVEKMVEGRLRKYLQEICAVDQDFVKNPDVTVEAFLKTKGGKLVDFVRYEVGEGMEKREENFADEVKGQMK</sequence>
<comment type="function">
    <text evidence="1">Associates with the EF-Tu.GDP complex and induces the exchange of GDP to GTP. It remains bound to the aminoacyl-tRNA.EF-Tu.GTP complex up to the GTP hydrolysis stage on the ribosome.</text>
</comment>
<comment type="subcellular location">
    <subcellularLocation>
        <location evidence="1">Cytoplasm</location>
    </subcellularLocation>
</comment>
<comment type="similarity">
    <text evidence="1">Belongs to the EF-Ts family.</text>
</comment>
<feature type="chain" id="PRO_0000161197" description="Elongation factor Ts">
    <location>
        <begin position="1"/>
        <end position="293"/>
    </location>
</feature>
<feature type="region of interest" description="Involved in Mg(2+) ion dislocation from EF-Tu" evidence="1">
    <location>
        <begin position="80"/>
        <end position="83"/>
    </location>
</feature>
<reference key="1">
    <citation type="journal article" date="2001" name="Lancet">
        <title>Whole genome sequencing of meticillin-resistant Staphylococcus aureus.</title>
        <authorList>
            <person name="Kuroda M."/>
            <person name="Ohta T."/>
            <person name="Uchiyama I."/>
            <person name="Baba T."/>
            <person name="Yuzawa H."/>
            <person name="Kobayashi I."/>
            <person name="Cui L."/>
            <person name="Oguchi A."/>
            <person name="Aoki K."/>
            <person name="Nagai Y."/>
            <person name="Lian J.-Q."/>
            <person name="Ito T."/>
            <person name="Kanamori M."/>
            <person name="Matsumaru H."/>
            <person name="Maruyama A."/>
            <person name="Murakami H."/>
            <person name="Hosoyama A."/>
            <person name="Mizutani-Ui Y."/>
            <person name="Takahashi N.K."/>
            <person name="Sawano T."/>
            <person name="Inoue R."/>
            <person name="Kaito C."/>
            <person name="Sekimizu K."/>
            <person name="Hirakawa H."/>
            <person name="Kuhara S."/>
            <person name="Goto S."/>
            <person name="Yabuzaki J."/>
            <person name="Kanehisa M."/>
            <person name="Yamashita A."/>
            <person name="Oshima K."/>
            <person name="Furuya K."/>
            <person name="Yoshino C."/>
            <person name="Shiba T."/>
            <person name="Hattori M."/>
            <person name="Ogasawara N."/>
            <person name="Hayashi H."/>
            <person name="Hiramatsu K."/>
        </authorList>
    </citation>
    <scope>NUCLEOTIDE SEQUENCE [LARGE SCALE GENOMIC DNA]</scope>
    <source>
        <strain>N315</strain>
    </source>
</reference>
<reference key="2">
    <citation type="journal article" date="2005" name="J. Microbiol. Methods">
        <title>Correlation of proteomic and transcriptomic profiles of Staphylococcus aureus during the post-exponential phase of growth.</title>
        <authorList>
            <person name="Scherl A."/>
            <person name="Francois P."/>
            <person name="Bento M."/>
            <person name="Deshusses J.M."/>
            <person name="Charbonnier Y."/>
            <person name="Converset V."/>
            <person name="Huyghe A."/>
            <person name="Walter N."/>
            <person name="Hoogland C."/>
            <person name="Appel R.D."/>
            <person name="Sanchez J.-C."/>
            <person name="Zimmermann-Ivol C.G."/>
            <person name="Corthals G.L."/>
            <person name="Hochstrasser D.F."/>
            <person name="Schrenzel J."/>
        </authorList>
    </citation>
    <scope>IDENTIFICATION BY MASS SPECTROMETRY</scope>
    <source>
        <strain>N315</strain>
    </source>
</reference>
<reference key="3">
    <citation type="submission" date="2007-10" db="UniProtKB">
        <title>Shotgun proteomic analysis of total and membrane protein extracts of S. aureus strain N315.</title>
        <authorList>
            <person name="Vaezzadeh A.R."/>
            <person name="Deshusses J."/>
            <person name="Lescuyer P."/>
            <person name="Hochstrasser D.F."/>
        </authorList>
    </citation>
    <scope>IDENTIFICATION BY MASS SPECTROMETRY [LARGE SCALE ANALYSIS]</scope>
    <source>
        <strain>N315</strain>
    </source>
</reference>
<evidence type="ECO:0000255" key="1">
    <source>
        <dbReference type="HAMAP-Rule" id="MF_00050"/>
    </source>
</evidence>
<name>EFTS_STAAN</name>